<accession>P67007</accession>
<accession>Q99UB0</accession>
<feature type="chain" id="PRO_0000154381" description="N-(5'-phosphoribosyl)anthranilate isomerase">
    <location>
        <begin position="1"/>
        <end position="210"/>
    </location>
</feature>
<keyword id="KW-0028">Amino-acid biosynthesis</keyword>
<keyword id="KW-0057">Aromatic amino acid biosynthesis</keyword>
<keyword id="KW-0413">Isomerase</keyword>
<keyword id="KW-0822">Tryptophan biosynthesis</keyword>
<organism>
    <name type="scientific">Staphylococcus aureus (strain MW2)</name>
    <dbReference type="NCBI Taxonomy" id="196620"/>
    <lineage>
        <taxon>Bacteria</taxon>
        <taxon>Bacillati</taxon>
        <taxon>Bacillota</taxon>
        <taxon>Bacilli</taxon>
        <taxon>Bacillales</taxon>
        <taxon>Staphylococcaceae</taxon>
        <taxon>Staphylococcus</taxon>
    </lineage>
</organism>
<evidence type="ECO:0000255" key="1">
    <source>
        <dbReference type="HAMAP-Rule" id="MF_00135"/>
    </source>
</evidence>
<name>TRPF_STAAW</name>
<reference key="1">
    <citation type="journal article" date="2002" name="Lancet">
        <title>Genome and virulence determinants of high virulence community-acquired MRSA.</title>
        <authorList>
            <person name="Baba T."/>
            <person name="Takeuchi F."/>
            <person name="Kuroda M."/>
            <person name="Yuzawa H."/>
            <person name="Aoki K."/>
            <person name="Oguchi A."/>
            <person name="Nagai Y."/>
            <person name="Iwama N."/>
            <person name="Asano K."/>
            <person name="Naimi T."/>
            <person name="Kuroda H."/>
            <person name="Cui L."/>
            <person name="Yamamoto K."/>
            <person name="Hiramatsu K."/>
        </authorList>
    </citation>
    <scope>NUCLEOTIDE SEQUENCE [LARGE SCALE GENOMIC DNA]</scope>
    <source>
        <strain>MW2</strain>
    </source>
</reference>
<protein>
    <recommendedName>
        <fullName evidence="1">N-(5'-phosphoribosyl)anthranilate isomerase</fullName>
        <shortName evidence="1">PRAI</shortName>
        <ecNumber evidence="1">5.3.1.24</ecNumber>
    </recommendedName>
</protein>
<sequence length="210" mass="23389">MKLKFCGFTSIKDVTAASQLPIDAIGFIHYEKSKRHQTITQIKKLASAVPNHIDKVCVMVNPDLTTIEHVLSNTSINTIQLHGTESIDFIQEIKKKYSSIKITKALAADENIIQNINKYKGFVDLFIIDTPSVSYGGTGQTYDWTILKHIKDIPYLIAGGINSENIQTVNQLKLSHQGYDLASGIEVNGRKDIEKMTAIVNIVKGDRDNE</sequence>
<gene>
    <name evidence="1" type="primary">trpF</name>
    <name type="ordered locus">MW1258</name>
</gene>
<proteinExistence type="inferred from homology"/>
<comment type="catalytic activity">
    <reaction evidence="1">
        <text>N-(5-phospho-beta-D-ribosyl)anthranilate = 1-(2-carboxyphenylamino)-1-deoxy-D-ribulose 5-phosphate</text>
        <dbReference type="Rhea" id="RHEA:21540"/>
        <dbReference type="ChEBI" id="CHEBI:18277"/>
        <dbReference type="ChEBI" id="CHEBI:58613"/>
        <dbReference type="EC" id="5.3.1.24"/>
    </reaction>
</comment>
<comment type="pathway">
    <text evidence="1">Amino-acid biosynthesis; L-tryptophan biosynthesis; L-tryptophan from chorismate: step 3/5.</text>
</comment>
<comment type="similarity">
    <text evidence="1">Belongs to the TrpF family.</text>
</comment>
<dbReference type="EC" id="5.3.1.24" evidence="1"/>
<dbReference type="EMBL" id="BA000033">
    <property type="protein sequence ID" value="BAB95123.1"/>
    <property type="molecule type" value="Genomic_DNA"/>
</dbReference>
<dbReference type="RefSeq" id="WP_000768192.1">
    <property type="nucleotide sequence ID" value="NC_003923.1"/>
</dbReference>
<dbReference type="SMR" id="P67007"/>
<dbReference type="KEGG" id="sam:MW1258"/>
<dbReference type="HOGENOM" id="CLU_076364_1_1_9"/>
<dbReference type="UniPathway" id="UPA00035">
    <property type="reaction ID" value="UER00042"/>
</dbReference>
<dbReference type="GO" id="GO:0004640">
    <property type="term" value="F:phosphoribosylanthranilate isomerase activity"/>
    <property type="evidence" value="ECO:0007669"/>
    <property type="project" value="UniProtKB-UniRule"/>
</dbReference>
<dbReference type="GO" id="GO:0000162">
    <property type="term" value="P:L-tryptophan biosynthetic process"/>
    <property type="evidence" value="ECO:0007669"/>
    <property type="project" value="UniProtKB-UniRule"/>
</dbReference>
<dbReference type="CDD" id="cd00405">
    <property type="entry name" value="PRAI"/>
    <property type="match status" value="1"/>
</dbReference>
<dbReference type="FunFam" id="3.20.20.70:FF:000277">
    <property type="entry name" value="Phosphoribosylanthranilate isomerase"/>
    <property type="match status" value="1"/>
</dbReference>
<dbReference type="Gene3D" id="3.20.20.70">
    <property type="entry name" value="Aldolase class I"/>
    <property type="match status" value="1"/>
</dbReference>
<dbReference type="HAMAP" id="MF_00135">
    <property type="entry name" value="PRAI"/>
    <property type="match status" value="1"/>
</dbReference>
<dbReference type="InterPro" id="IPR013785">
    <property type="entry name" value="Aldolase_TIM"/>
</dbReference>
<dbReference type="InterPro" id="IPR001240">
    <property type="entry name" value="PRAI_dom"/>
</dbReference>
<dbReference type="InterPro" id="IPR011060">
    <property type="entry name" value="RibuloseP-bd_barrel"/>
</dbReference>
<dbReference type="InterPro" id="IPR044643">
    <property type="entry name" value="TrpF_fam"/>
</dbReference>
<dbReference type="NCBIfam" id="NF010563">
    <property type="entry name" value="PRK13958.1"/>
    <property type="match status" value="1"/>
</dbReference>
<dbReference type="PANTHER" id="PTHR42894">
    <property type="entry name" value="N-(5'-PHOSPHORIBOSYL)ANTHRANILATE ISOMERASE"/>
    <property type="match status" value="1"/>
</dbReference>
<dbReference type="PANTHER" id="PTHR42894:SF1">
    <property type="entry name" value="N-(5'-PHOSPHORIBOSYL)ANTHRANILATE ISOMERASE"/>
    <property type="match status" value="1"/>
</dbReference>
<dbReference type="Pfam" id="PF00697">
    <property type="entry name" value="PRAI"/>
    <property type="match status" value="1"/>
</dbReference>
<dbReference type="SUPFAM" id="SSF51366">
    <property type="entry name" value="Ribulose-phoshate binding barrel"/>
    <property type="match status" value="1"/>
</dbReference>